<proteinExistence type="inferred from homology"/>
<organism>
    <name type="scientific">Bacteroides thetaiotaomicron (strain ATCC 29148 / DSM 2079 / JCM 5827 / CCUG 10774 / NCTC 10582 / VPI-5482 / E50)</name>
    <dbReference type="NCBI Taxonomy" id="226186"/>
    <lineage>
        <taxon>Bacteria</taxon>
        <taxon>Pseudomonadati</taxon>
        <taxon>Bacteroidota</taxon>
        <taxon>Bacteroidia</taxon>
        <taxon>Bacteroidales</taxon>
        <taxon>Bacteroidaceae</taxon>
        <taxon>Bacteroides</taxon>
    </lineage>
</organism>
<accession>Q8A9U7</accession>
<comment type="function">
    <text evidence="1">Produces ATP from ADP in the presence of a proton gradient across the membrane. The alpha chain is a regulatory subunit.</text>
</comment>
<comment type="catalytic activity">
    <reaction evidence="1">
        <text>ATP + H2O + 4 H(+)(in) = ADP + phosphate + 5 H(+)(out)</text>
        <dbReference type="Rhea" id="RHEA:57720"/>
        <dbReference type="ChEBI" id="CHEBI:15377"/>
        <dbReference type="ChEBI" id="CHEBI:15378"/>
        <dbReference type="ChEBI" id="CHEBI:30616"/>
        <dbReference type="ChEBI" id="CHEBI:43474"/>
        <dbReference type="ChEBI" id="CHEBI:456216"/>
        <dbReference type="EC" id="7.1.2.2"/>
    </reaction>
</comment>
<comment type="subunit">
    <text evidence="1">F-type ATPases have 2 components, CF(1) - the catalytic core - and CF(0) - the membrane proton channel. CF(1) has five subunits: alpha(3), beta(3), gamma(1), delta(1), epsilon(1). CF(0) has three main subunits: a(1), b(2) and c(9-12). The alpha and beta chains form an alternating ring which encloses part of the gamma chain. CF(1) is attached to CF(0) by a central stalk formed by the gamma and epsilon chains, while a peripheral stalk is formed by the delta and b chains.</text>
</comment>
<comment type="subcellular location">
    <subcellularLocation>
        <location evidence="1">Cell inner membrane</location>
        <topology evidence="1">Peripheral membrane protein</topology>
    </subcellularLocation>
</comment>
<comment type="similarity">
    <text evidence="1">Belongs to the ATPase alpha/beta chains family.</text>
</comment>
<name>ATPA_BACTN</name>
<reference key="1">
    <citation type="journal article" date="2003" name="Science">
        <title>A genomic view of the human-Bacteroides thetaiotaomicron symbiosis.</title>
        <authorList>
            <person name="Xu J."/>
            <person name="Bjursell M.K."/>
            <person name="Himrod J."/>
            <person name="Deng S."/>
            <person name="Carmichael L.K."/>
            <person name="Chiang H.C."/>
            <person name="Hooper L.V."/>
            <person name="Gordon J.I."/>
        </authorList>
    </citation>
    <scope>NUCLEOTIDE SEQUENCE [LARGE SCALE GENOMIC DNA]</scope>
    <source>
        <strain>ATCC 29148 / DSM 2079 / JCM 5827 / CCUG 10774 / NCTC 10582 / VPI-5482 / E50</strain>
    </source>
</reference>
<gene>
    <name evidence="1" type="primary">atpA</name>
    <name type="ordered locus">BT_0718</name>
</gene>
<evidence type="ECO:0000255" key="1">
    <source>
        <dbReference type="HAMAP-Rule" id="MF_01346"/>
    </source>
</evidence>
<feature type="chain" id="PRO_0000238201" description="ATP synthase subunit alpha">
    <location>
        <begin position="1"/>
        <end position="527"/>
    </location>
</feature>
<feature type="binding site" evidence="1">
    <location>
        <begin position="172"/>
        <end position="179"/>
    </location>
    <ligand>
        <name>ATP</name>
        <dbReference type="ChEBI" id="CHEBI:30616"/>
    </ligand>
</feature>
<feature type="site" description="Required for activity" evidence="1">
    <location>
        <position position="388"/>
    </location>
</feature>
<dbReference type="EC" id="7.1.2.2" evidence="1"/>
<dbReference type="EMBL" id="AE015928">
    <property type="protein sequence ID" value="AAO75825.1"/>
    <property type="molecule type" value="Genomic_DNA"/>
</dbReference>
<dbReference type="RefSeq" id="NP_809631.1">
    <property type="nucleotide sequence ID" value="NC_004663.1"/>
</dbReference>
<dbReference type="RefSeq" id="WP_011107412.1">
    <property type="nucleotide sequence ID" value="NC_004663.1"/>
</dbReference>
<dbReference type="SMR" id="Q8A9U7"/>
<dbReference type="FunCoup" id="Q8A9U7">
    <property type="interactions" value="372"/>
</dbReference>
<dbReference type="STRING" id="226186.BT_0718"/>
<dbReference type="PaxDb" id="226186-BT_0718"/>
<dbReference type="EnsemblBacteria" id="AAO75825">
    <property type="protein sequence ID" value="AAO75825"/>
    <property type="gene ID" value="BT_0718"/>
</dbReference>
<dbReference type="KEGG" id="bth:BT_0718"/>
<dbReference type="PATRIC" id="fig|226186.12.peg.733"/>
<dbReference type="eggNOG" id="COG0056">
    <property type="taxonomic scope" value="Bacteria"/>
</dbReference>
<dbReference type="HOGENOM" id="CLU_010091_2_1_10"/>
<dbReference type="InParanoid" id="Q8A9U7"/>
<dbReference type="OrthoDB" id="9803053at2"/>
<dbReference type="Proteomes" id="UP000001414">
    <property type="component" value="Chromosome"/>
</dbReference>
<dbReference type="GO" id="GO:0005886">
    <property type="term" value="C:plasma membrane"/>
    <property type="evidence" value="ECO:0007669"/>
    <property type="project" value="UniProtKB-SubCell"/>
</dbReference>
<dbReference type="GO" id="GO:0045259">
    <property type="term" value="C:proton-transporting ATP synthase complex"/>
    <property type="evidence" value="ECO:0007669"/>
    <property type="project" value="UniProtKB-KW"/>
</dbReference>
<dbReference type="GO" id="GO:0043531">
    <property type="term" value="F:ADP binding"/>
    <property type="evidence" value="ECO:0000318"/>
    <property type="project" value="GO_Central"/>
</dbReference>
<dbReference type="GO" id="GO:0005524">
    <property type="term" value="F:ATP binding"/>
    <property type="evidence" value="ECO:0000318"/>
    <property type="project" value="GO_Central"/>
</dbReference>
<dbReference type="GO" id="GO:0046933">
    <property type="term" value="F:proton-transporting ATP synthase activity, rotational mechanism"/>
    <property type="evidence" value="ECO:0007669"/>
    <property type="project" value="UniProtKB-UniRule"/>
</dbReference>
<dbReference type="GO" id="GO:0015986">
    <property type="term" value="P:proton motive force-driven ATP synthesis"/>
    <property type="evidence" value="ECO:0000318"/>
    <property type="project" value="GO_Central"/>
</dbReference>
<dbReference type="CDD" id="cd18113">
    <property type="entry name" value="ATP-synt_F1_alpha_C"/>
    <property type="match status" value="1"/>
</dbReference>
<dbReference type="CDD" id="cd18116">
    <property type="entry name" value="ATP-synt_F1_alpha_N"/>
    <property type="match status" value="1"/>
</dbReference>
<dbReference type="CDD" id="cd01132">
    <property type="entry name" value="F1-ATPase_alpha_CD"/>
    <property type="match status" value="1"/>
</dbReference>
<dbReference type="FunFam" id="1.20.150.20:FF:000001">
    <property type="entry name" value="ATP synthase subunit alpha"/>
    <property type="match status" value="1"/>
</dbReference>
<dbReference type="FunFam" id="2.40.30.20:FF:000001">
    <property type="entry name" value="ATP synthase subunit alpha"/>
    <property type="match status" value="1"/>
</dbReference>
<dbReference type="FunFam" id="3.40.50.300:FF:000002">
    <property type="entry name" value="ATP synthase subunit alpha"/>
    <property type="match status" value="1"/>
</dbReference>
<dbReference type="Gene3D" id="2.40.30.20">
    <property type="match status" value="1"/>
</dbReference>
<dbReference type="Gene3D" id="1.20.150.20">
    <property type="entry name" value="ATP synthase alpha/beta chain, C-terminal domain"/>
    <property type="match status" value="1"/>
</dbReference>
<dbReference type="Gene3D" id="3.40.50.300">
    <property type="entry name" value="P-loop containing nucleotide triphosphate hydrolases"/>
    <property type="match status" value="1"/>
</dbReference>
<dbReference type="HAMAP" id="MF_01346">
    <property type="entry name" value="ATP_synth_alpha_bact"/>
    <property type="match status" value="1"/>
</dbReference>
<dbReference type="InterPro" id="IPR023366">
    <property type="entry name" value="ATP_synth_asu-like_sf"/>
</dbReference>
<dbReference type="InterPro" id="IPR000793">
    <property type="entry name" value="ATP_synth_asu_C"/>
</dbReference>
<dbReference type="InterPro" id="IPR038376">
    <property type="entry name" value="ATP_synth_asu_C_sf"/>
</dbReference>
<dbReference type="InterPro" id="IPR033732">
    <property type="entry name" value="ATP_synth_F1_a_nt-bd_dom"/>
</dbReference>
<dbReference type="InterPro" id="IPR005294">
    <property type="entry name" value="ATP_synth_F1_asu"/>
</dbReference>
<dbReference type="InterPro" id="IPR020003">
    <property type="entry name" value="ATPase_a/bsu_AS"/>
</dbReference>
<dbReference type="InterPro" id="IPR004100">
    <property type="entry name" value="ATPase_F1/V1/A1_a/bsu_N"/>
</dbReference>
<dbReference type="InterPro" id="IPR036121">
    <property type="entry name" value="ATPase_F1/V1/A1_a/bsu_N_sf"/>
</dbReference>
<dbReference type="InterPro" id="IPR000194">
    <property type="entry name" value="ATPase_F1/V1/A1_a/bsu_nucl-bd"/>
</dbReference>
<dbReference type="InterPro" id="IPR027417">
    <property type="entry name" value="P-loop_NTPase"/>
</dbReference>
<dbReference type="NCBIfam" id="TIGR00962">
    <property type="entry name" value="atpA"/>
    <property type="match status" value="1"/>
</dbReference>
<dbReference type="NCBIfam" id="NF009884">
    <property type="entry name" value="PRK13343.1"/>
    <property type="match status" value="1"/>
</dbReference>
<dbReference type="PANTHER" id="PTHR48082">
    <property type="entry name" value="ATP SYNTHASE SUBUNIT ALPHA, MITOCHONDRIAL"/>
    <property type="match status" value="1"/>
</dbReference>
<dbReference type="PANTHER" id="PTHR48082:SF2">
    <property type="entry name" value="ATP SYNTHASE SUBUNIT ALPHA, MITOCHONDRIAL"/>
    <property type="match status" value="1"/>
</dbReference>
<dbReference type="Pfam" id="PF00006">
    <property type="entry name" value="ATP-synt_ab"/>
    <property type="match status" value="1"/>
</dbReference>
<dbReference type="Pfam" id="PF00306">
    <property type="entry name" value="ATP-synt_ab_C"/>
    <property type="match status" value="1"/>
</dbReference>
<dbReference type="Pfam" id="PF02874">
    <property type="entry name" value="ATP-synt_ab_N"/>
    <property type="match status" value="1"/>
</dbReference>
<dbReference type="SUPFAM" id="SSF47917">
    <property type="entry name" value="C-terminal domain of alpha and beta subunits of F1 ATP synthase"/>
    <property type="match status" value="1"/>
</dbReference>
<dbReference type="SUPFAM" id="SSF50615">
    <property type="entry name" value="N-terminal domain of alpha and beta subunits of F1 ATP synthase"/>
    <property type="match status" value="1"/>
</dbReference>
<dbReference type="SUPFAM" id="SSF52540">
    <property type="entry name" value="P-loop containing nucleoside triphosphate hydrolases"/>
    <property type="match status" value="1"/>
</dbReference>
<dbReference type="PROSITE" id="PS00152">
    <property type="entry name" value="ATPASE_ALPHA_BETA"/>
    <property type="match status" value="1"/>
</dbReference>
<keyword id="KW-0066">ATP synthesis</keyword>
<keyword id="KW-0067">ATP-binding</keyword>
<keyword id="KW-0997">Cell inner membrane</keyword>
<keyword id="KW-1003">Cell membrane</keyword>
<keyword id="KW-0139">CF(1)</keyword>
<keyword id="KW-0375">Hydrogen ion transport</keyword>
<keyword id="KW-0406">Ion transport</keyword>
<keyword id="KW-0472">Membrane</keyword>
<keyword id="KW-0547">Nucleotide-binding</keyword>
<keyword id="KW-1185">Reference proteome</keyword>
<keyword id="KW-1278">Translocase</keyword>
<keyword id="KW-0813">Transport</keyword>
<sequence>MSENIRVSEVSDILRKQLEGINTNVQLDEIGTVLQVSDGVVRIYGLRNAEANELLEFDNGIKAIVMNLEEDNVGAVLLGPTDRIKEGFIVKRTKRIASIRVGESMLGRVIDPLGEPLDGKGLIGGELYEMPLERKAPGVIYRQPVNQPLQTGLKAVDAMIPIGRGQRELIIGDRQTGKTSIAIDTIINQRNNFLAGDPVYCIYVAIGQKGSTVASIVNTLREYGAMDYTIVVAATAGDPAALQYYAPFAGAAIGEYFRDTGRHALVVYDDLSKQAVAYREVSLILRRPSGREAYPGDIFYLHSRLLERAAKIIKEEEVAREMNDLPESLKGIVKVGGSLTALPIIETQAGDVSAYIPTNVISITDGQIFLETDLFNQGVRPAINVGISVSRVGGNAQIKAMKKVAGTLKMDQAQYRELEAFSKFSSDMDPITAMTIDKGRKNAQLLIQPQYSPMPVEQQIAILYCGTHGLLHDVPLENVQDFERSFIESLQLNHQEDVLDVLRTGVIDDNVTKAIEETAAMVAKQYL</sequence>
<protein>
    <recommendedName>
        <fullName evidence="1">ATP synthase subunit alpha</fullName>
        <ecNumber evidence="1">7.1.2.2</ecNumber>
    </recommendedName>
    <alternativeName>
        <fullName evidence="1">ATP synthase F1 sector subunit alpha</fullName>
    </alternativeName>
    <alternativeName>
        <fullName evidence="1">F-ATPase subunit alpha</fullName>
    </alternativeName>
</protein>